<accession>Q6LH20</accession>
<feature type="chain" id="PRO_0000249761" description="Glycine/sarcosine/betaine reductase complex component A1">
    <location>
        <begin position="1"/>
        <end position="158"/>
    </location>
</feature>
<feature type="active site" evidence="1">
    <location>
        <position position="46"/>
    </location>
</feature>
<feature type="non-standard amino acid" description="Selenocysteine" evidence="2">
    <location>
        <position position="46"/>
    </location>
</feature>
<sequence>MNKEVFATKTAIILGDRDGIPGQAIEACIKTTGAHVAFSTTECFVUTSAGAMDLENQKRIKALADEFGAENIIVILGGAEAEASGLACETVTTGDPTFAGPLAGVQLGLSCYHVVEDAIKEAVDPAVYEEQIGMMEMVLDVDAIKAEMQQYREEPVEA</sequence>
<reference key="1">
    <citation type="journal article" date="2005" name="Science">
        <title>Life at depth: Photobacterium profundum genome sequence and expression analysis.</title>
        <authorList>
            <person name="Vezzi A."/>
            <person name="Campanaro S."/>
            <person name="D'Angelo M."/>
            <person name="Simonato F."/>
            <person name="Vitulo N."/>
            <person name="Lauro F.M."/>
            <person name="Cestaro A."/>
            <person name="Malacrida G."/>
            <person name="Simionati B."/>
            <person name="Cannata N."/>
            <person name="Romualdi C."/>
            <person name="Bartlett D.H."/>
            <person name="Valle G."/>
        </authorList>
    </citation>
    <scope>NUCLEOTIDE SEQUENCE [LARGE SCALE GENOMIC DNA]</scope>
    <source>
        <strain>ATCC BAA-1253 / SS9</strain>
    </source>
</reference>
<protein>
    <recommendedName>
        <fullName>Glycine/sarcosine/betaine reductase complex component A1</fullName>
        <ecNumber>1.21.4.2</ecNumber>
        <ecNumber>1.21.4.3</ecNumber>
        <ecNumber>1.21.4.4</ecNumber>
    </recommendedName>
    <alternativeName>
        <fullName>Selenoprotein PA 1</fullName>
    </alternativeName>
    <alternativeName>
        <fullName>Thioredoxin reductase complex selenoprotein A 1</fullName>
    </alternativeName>
</protein>
<name>GRDA1_PHOPR</name>
<keyword id="KW-0560">Oxidoreductase</keyword>
<keyword id="KW-1185">Reference proteome</keyword>
<keyword id="KW-0712">Selenocysteine</keyword>
<comment type="function">
    <text evidence="1">In the first step of glycine, betaine and sarcosine reductases, the substrate is bound to component PB via a Schiff base intermediate. Then the PB-activated substrate is nucleophilically attacked by the selenol anion of component PA to transform it to a carboxymethylated selenoether and the respective amine. By action of component PC, acetyl phosphate is formed, leaving component PA in its oxidized state. Finally component PA becomes reduced by the thioredoxin system to start a new catalytic cycle of reductive deamination (By similarity).</text>
</comment>
<comment type="catalytic activity">
    <reaction>
        <text>acetyl phosphate + [thioredoxin]-disulfide + NH4(+) + H2O = [thioredoxin]-dithiol + glycine + phosphate + H(+)</text>
        <dbReference type="Rhea" id="RHEA:12232"/>
        <dbReference type="Rhea" id="RHEA-COMP:10698"/>
        <dbReference type="Rhea" id="RHEA-COMP:10700"/>
        <dbReference type="ChEBI" id="CHEBI:15377"/>
        <dbReference type="ChEBI" id="CHEBI:15378"/>
        <dbReference type="ChEBI" id="CHEBI:22191"/>
        <dbReference type="ChEBI" id="CHEBI:28938"/>
        <dbReference type="ChEBI" id="CHEBI:29950"/>
        <dbReference type="ChEBI" id="CHEBI:43474"/>
        <dbReference type="ChEBI" id="CHEBI:50058"/>
        <dbReference type="ChEBI" id="CHEBI:57305"/>
        <dbReference type="EC" id="1.21.4.2"/>
    </reaction>
</comment>
<comment type="catalytic activity">
    <reaction>
        <text>acetyl phosphate + methylamine + [thioredoxin]-disulfide + H2O = sarcosine + [thioredoxin]-dithiol + phosphate + H(+)</text>
        <dbReference type="Rhea" id="RHEA:12825"/>
        <dbReference type="Rhea" id="RHEA-COMP:10698"/>
        <dbReference type="Rhea" id="RHEA-COMP:10700"/>
        <dbReference type="ChEBI" id="CHEBI:15377"/>
        <dbReference type="ChEBI" id="CHEBI:15378"/>
        <dbReference type="ChEBI" id="CHEBI:22191"/>
        <dbReference type="ChEBI" id="CHEBI:29950"/>
        <dbReference type="ChEBI" id="CHEBI:43474"/>
        <dbReference type="ChEBI" id="CHEBI:50058"/>
        <dbReference type="ChEBI" id="CHEBI:57433"/>
        <dbReference type="ChEBI" id="CHEBI:59338"/>
        <dbReference type="EC" id="1.21.4.3"/>
    </reaction>
</comment>
<comment type="catalytic activity">
    <reaction>
        <text>acetyl phosphate + trimethylamine + [thioredoxin]-disulfide + H2O = glycine betaine + [thioredoxin]-dithiol + phosphate + H(+)</text>
        <dbReference type="Rhea" id="RHEA:11848"/>
        <dbReference type="Rhea" id="RHEA-COMP:10698"/>
        <dbReference type="Rhea" id="RHEA-COMP:10700"/>
        <dbReference type="ChEBI" id="CHEBI:15377"/>
        <dbReference type="ChEBI" id="CHEBI:15378"/>
        <dbReference type="ChEBI" id="CHEBI:17750"/>
        <dbReference type="ChEBI" id="CHEBI:22191"/>
        <dbReference type="ChEBI" id="CHEBI:29950"/>
        <dbReference type="ChEBI" id="CHEBI:43474"/>
        <dbReference type="ChEBI" id="CHEBI:50058"/>
        <dbReference type="ChEBI" id="CHEBI:58389"/>
        <dbReference type="EC" id="1.21.4.4"/>
    </reaction>
</comment>
<comment type="subunit">
    <text evidence="1">Monomer. Component of the glycine, sarcosine and betaine reductase complexes, together with components B and C (By similarity).</text>
</comment>
<comment type="similarity">
    <text evidence="2">Belongs to the GrdA family.</text>
</comment>
<comment type="sequence caution" evidence="2">
    <conflict type="erroneous termination">
        <sequence resource="EMBL-CDS" id="CAG23410"/>
    </conflict>
    <text>Truncated C-terminus.</text>
</comment>
<evidence type="ECO:0000250" key="1"/>
<evidence type="ECO:0000305" key="2"/>
<dbReference type="EC" id="1.21.4.2"/>
<dbReference type="EC" id="1.21.4.3"/>
<dbReference type="EC" id="1.21.4.4"/>
<dbReference type="EMBL" id="CR378679">
    <property type="protein sequence ID" value="CAG23410.1"/>
    <property type="status" value="ALT_SEQ"/>
    <property type="molecule type" value="Genomic_DNA"/>
</dbReference>
<dbReference type="STRING" id="298386.PBPRB1548"/>
<dbReference type="KEGG" id="ppr:PBPRB1548"/>
<dbReference type="eggNOG" id="ENOG50313TT">
    <property type="taxonomic scope" value="Bacteria"/>
</dbReference>
<dbReference type="HOGENOM" id="CLU_142275_0_0_6"/>
<dbReference type="Proteomes" id="UP000000593">
    <property type="component" value="Chromosome 2"/>
</dbReference>
<dbReference type="GO" id="GO:0030700">
    <property type="term" value="C:glycine reductase complex"/>
    <property type="evidence" value="ECO:0007669"/>
    <property type="project" value="InterPro"/>
</dbReference>
<dbReference type="GO" id="GO:0033795">
    <property type="term" value="F:betaine reductase activity"/>
    <property type="evidence" value="ECO:0007669"/>
    <property type="project" value="UniProtKB-EC"/>
</dbReference>
<dbReference type="GO" id="GO:0030699">
    <property type="term" value="F:glycine reductase activity"/>
    <property type="evidence" value="ECO:0007669"/>
    <property type="project" value="UniProtKB-UniRule"/>
</dbReference>
<dbReference type="GO" id="GO:0033794">
    <property type="term" value="F:sarcosine reductase activity"/>
    <property type="evidence" value="ECO:0007669"/>
    <property type="project" value="UniProtKB-EC"/>
</dbReference>
<dbReference type="HAMAP" id="MF_00826">
    <property type="entry name" value="GRDA"/>
    <property type="match status" value="1"/>
</dbReference>
<dbReference type="InterPro" id="IPR006812">
    <property type="entry name" value="GRDA"/>
</dbReference>
<dbReference type="NCBIfam" id="NF040748">
    <property type="entry name" value="reduct_selen_A"/>
    <property type="match status" value="1"/>
</dbReference>
<dbReference type="Pfam" id="PF04723">
    <property type="entry name" value="GRDA"/>
    <property type="match status" value="1"/>
</dbReference>
<dbReference type="PIRSF" id="PIRSF000181">
    <property type="entry name" value="Grc_selenoprot_A"/>
    <property type="match status" value="1"/>
</dbReference>
<gene>
    <name type="primary">grdA1</name>
    <name type="ordered locus">PBPRB1548</name>
</gene>
<organism>
    <name type="scientific">Photobacterium profundum (strain SS9)</name>
    <dbReference type="NCBI Taxonomy" id="298386"/>
    <lineage>
        <taxon>Bacteria</taxon>
        <taxon>Pseudomonadati</taxon>
        <taxon>Pseudomonadota</taxon>
        <taxon>Gammaproteobacteria</taxon>
        <taxon>Vibrionales</taxon>
        <taxon>Vibrionaceae</taxon>
        <taxon>Photobacterium</taxon>
    </lineage>
</organism>
<proteinExistence type="inferred from homology"/>